<organism>
    <name type="scientific">Lactococcus lactis subsp. lactis (strain IL1403)</name>
    <name type="common">Streptococcus lactis</name>
    <dbReference type="NCBI Taxonomy" id="272623"/>
    <lineage>
        <taxon>Bacteria</taxon>
        <taxon>Bacillati</taxon>
        <taxon>Bacillota</taxon>
        <taxon>Bacilli</taxon>
        <taxon>Lactobacillales</taxon>
        <taxon>Streptococcaceae</taxon>
        <taxon>Lactococcus</taxon>
    </lineage>
</organism>
<evidence type="ECO:0000255" key="1">
    <source>
        <dbReference type="HAMAP-Rule" id="MF_01465"/>
    </source>
</evidence>
<dbReference type="EMBL" id="AE005176">
    <property type="protein sequence ID" value="AAK06176.1"/>
    <property type="molecule type" value="Genomic_DNA"/>
</dbReference>
<dbReference type="PIR" id="F86884">
    <property type="entry name" value="F86884"/>
</dbReference>
<dbReference type="RefSeq" id="NP_268235.1">
    <property type="nucleotide sequence ID" value="NC_002662.1"/>
</dbReference>
<dbReference type="RefSeq" id="WP_003129919.1">
    <property type="nucleotide sequence ID" value="NC_002662.1"/>
</dbReference>
<dbReference type="SMR" id="P58118"/>
<dbReference type="PaxDb" id="272623-L0333"/>
<dbReference type="EnsemblBacteria" id="AAK06176">
    <property type="protein sequence ID" value="AAK06176"/>
    <property type="gene ID" value="L0333"/>
</dbReference>
<dbReference type="GeneID" id="89634426"/>
<dbReference type="KEGG" id="lla:L0333"/>
<dbReference type="PATRIC" id="fig|272623.7.peg.2237"/>
<dbReference type="eggNOG" id="COG0201">
    <property type="taxonomic scope" value="Bacteria"/>
</dbReference>
<dbReference type="HOGENOM" id="CLU_030313_0_1_9"/>
<dbReference type="OrthoDB" id="9809248at2"/>
<dbReference type="Proteomes" id="UP000002196">
    <property type="component" value="Chromosome"/>
</dbReference>
<dbReference type="GO" id="GO:0005886">
    <property type="term" value="C:plasma membrane"/>
    <property type="evidence" value="ECO:0007669"/>
    <property type="project" value="UniProtKB-SubCell"/>
</dbReference>
<dbReference type="GO" id="GO:0065002">
    <property type="term" value="P:intracellular protein transmembrane transport"/>
    <property type="evidence" value="ECO:0007669"/>
    <property type="project" value="UniProtKB-UniRule"/>
</dbReference>
<dbReference type="GO" id="GO:0006605">
    <property type="term" value="P:protein targeting"/>
    <property type="evidence" value="ECO:0007669"/>
    <property type="project" value="UniProtKB-UniRule"/>
</dbReference>
<dbReference type="GO" id="GO:0043952">
    <property type="term" value="P:protein transport by the Sec complex"/>
    <property type="evidence" value="ECO:0007669"/>
    <property type="project" value="UniProtKB-UniRule"/>
</dbReference>
<dbReference type="FunFam" id="1.10.3370.10:FF:000001">
    <property type="entry name" value="Preprotein translocase subunit SecY"/>
    <property type="match status" value="1"/>
</dbReference>
<dbReference type="Gene3D" id="1.10.3370.10">
    <property type="entry name" value="SecY subunit domain"/>
    <property type="match status" value="1"/>
</dbReference>
<dbReference type="HAMAP" id="MF_01465">
    <property type="entry name" value="SecY"/>
    <property type="match status" value="1"/>
</dbReference>
<dbReference type="InterPro" id="IPR026593">
    <property type="entry name" value="SecY"/>
</dbReference>
<dbReference type="InterPro" id="IPR002208">
    <property type="entry name" value="SecY/SEC61-alpha"/>
</dbReference>
<dbReference type="InterPro" id="IPR030659">
    <property type="entry name" value="SecY_CS"/>
</dbReference>
<dbReference type="InterPro" id="IPR023201">
    <property type="entry name" value="SecY_dom_sf"/>
</dbReference>
<dbReference type="NCBIfam" id="TIGR00967">
    <property type="entry name" value="3a0501s007"/>
    <property type="match status" value="1"/>
</dbReference>
<dbReference type="PANTHER" id="PTHR10906">
    <property type="entry name" value="SECY/SEC61-ALPHA FAMILY MEMBER"/>
    <property type="match status" value="1"/>
</dbReference>
<dbReference type="Pfam" id="PF00344">
    <property type="entry name" value="SecY"/>
    <property type="match status" value="1"/>
</dbReference>
<dbReference type="PIRSF" id="PIRSF004557">
    <property type="entry name" value="SecY"/>
    <property type="match status" value="1"/>
</dbReference>
<dbReference type="PRINTS" id="PR00303">
    <property type="entry name" value="SECYTRNLCASE"/>
</dbReference>
<dbReference type="SUPFAM" id="SSF103491">
    <property type="entry name" value="Preprotein translocase SecY subunit"/>
    <property type="match status" value="1"/>
</dbReference>
<dbReference type="PROSITE" id="PS00755">
    <property type="entry name" value="SECY_1"/>
    <property type="match status" value="1"/>
</dbReference>
<dbReference type="PROSITE" id="PS00756">
    <property type="entry name" value="SECY_2"/>
    <property type="match status" value="1"/>
</dbReference>
<comment type="function">
    <text evidence="1">The central subunit of the protein translocation channel SecYEG. Consists of two halves formed by TMs 1-5 and 6-10. These two domains form a lateral gate at the front which open onto the bilayer between TMs 2 and 7, and are clamped together by SecE at the back. The channel is closed by both a pore ring composed of hydrophobic SecY resides and a short helix (helix 2A) on the extracellular side of the membrane which forms a plug. The plug probably moves laterally to allow the channel to open. The ring and the pore may move independently.</text>
</comment>
<comment type="subunit">
    <text evidence="1">Component of the Sec protein translocase complex. Heterotrimer consisting of SecY, SecE and SecG subunits. The heterotrimers can form oligomers, although 1 heterotrimer is thought to be able to translocate proteins. Interacts with the ribosome. Interacts with SecDF, and other proteins may be involved. Interacts with SecA.</text>
</comment>
<comment type="subcellular location">
    <subcellularLocation>
        <location evidence="1">Cell membrane</location>
        <topology evidence="1">Multi-pass membrane protein</topology>
    </subcellularLocation>
</comment>
<comment type="similarity">
    <text evidence="1">Belongs to the SecY/SEC61-alpha family.</text>
</comment>
<keyword id="KW-1003">Cell membrane</keyword>
<keyword id="KW-0472">Membrane</keyword>
<keyword id="KW-0653">Protein transport</keyword>
<keyword id="KW-1185">Reference proteome</keyword>
<keyword id="KW-0811">Translocation</keyword>
<keyword id="KW-0812">Transmembrane</keyword>
<keyword id="KW-1133">Transmembrane helix</keyword>
<keyword id="KW-0813">Transport</keyword>
<sequence>MFFKTLKEAFKVKDVRARILFTIFILFVFRLGAHITVPGVNVQNLTEVSNLPFLNMMNLVSGNAMQNYSLFAMGVSPYITASIIVQLLQMDILPKFVEWSKQGEIGRRKLNQATRYITLVLAMAQSIGITAGFQAMSSLNIVQNPNWQSYLMIGAILTTGSMVVTWMGEQINEKGFGSGVSVIIFAGIVSSIPSAVKSVYDEKFLNVRPSEIPMSWLFVIGLVLSAIIIIYVTTFVQQAERKVPIQYTKLTQGAPTSSYLPLRVNPAGVIPVIFAGSITTAPATILQFLQRSQGSNVGWLSTLQDALSYTTWTGMLFYALLIVLFTFFYSFVQVNPEKMAENLQKQGSYIPSVRPGKGTEKYVSRLLMRLATVGALFLGLISIIPIAAQNVWGLPKIVALGGTSLLILIQVAIQAVKQLEGYLLKRKYAGFMDNPLETK</sequence>
<protein>
    <recommendedName>
        <fullName evidence="1">Protein translocase subunit SecY</fullName>
    </recommendedName>
</protein>
<name>SECY_LACLA</name>
<reference key="1">
    <citation type="journal article" date="2001" name="Genome Res.">
        <title>The complete genome sequence of the lactic acid bacterium Lactococcus lactis ssp. lactis IL1403.</title>
        <authorList>
            <person name="Bolotin A."/>
            <person name="Wincker P."/>
            <person name="Mauger S."/>
            <person name="Jaillon O."/>
            <person name="Malarme K."/>
            <person name="Weissenbach J."/>
            <person name="Ehrlich S.D."/>
            <person name="Sorokin A."/>
        </authorList>
    </citation>
    <scope>NUCLEOTIDE SEQUENCE [LARGE SCALE GENOMIC DNA]</scope>
    <source>
        <strain>IL1403</strain>
    </source>
</reference>
<feature type="chain" id="PRO_0000131727" description="Protein translocase subunit SecY">
    <location>
        <begin position="1"/>
        <end position="439"/>
    </location>
</feature>
<feature type="transmembrane region" description="Helical" evidence="1">
    <location>
        <begin position="19"/>
        <end position="39"/>
    </location>
</feature>
<feature type="transmembrane region" description="Helical" evidence="1">
    <location>
        <begin position="68"/>
        <end position="88"/>
    </location>
</feature>
<feature type="transmembrane region" description="Helical" evidence="1">
    <location>
        <begin position="116"/>
        <end position="136"/>
    </location>
</feature>
<feature type="transmembrane region" description="Helical" evidence="1">
    <location>
        <begin position="151"/>
        <end position="171"/>
    </location>
</feature>
<feature type="transmembrane region" description="Helical" evidence="1">
    <location>
        <begin position="176"/>
        <end position="196"/>
    </location>
</feature>
<feature type="transmembrane region" description="Helical" evidence="1">
    <location>
        <begin position="216"/>
        <end position="236"/>
    </location>
</feature>
<feature type="transmembrane region" description="Helical" evidence="1">
    <location>
        <begin position="269"/>
        <end position="289"/>
    </location>
</feature>
<feature type="transmembrane region" description="Helical" evidence="1">
    <location>
        <begin position="312"/>
        <end position="332"/>
    </location>
</feature>
<feature type="transmembrane region" description="Helical" evidence="1">
    <location>
        <begin position="373"/>
        <end position="393"/>
    </location>
</feature>
<feature type="transmembrane region" description="Helical" evidence="1">
    <location>
        <begin position="396"/>
        <end position="416"/>
    </location>
</feature>
<gene>
    <name evidence="1" type="primary">secY</name>
    <name type="ordered locus">LL2078</name>
    <name type="ORF">L0333</name>
</gene>
<proteinExistence type="inferred from homology"/>
<accession>P58118</accession>